<sequence>MSISKAIAADLLEIKAVSLSPSQPFTWASGIKSPIYTDNRVTLAYPEVRSQIEGAFAELIKTEFPEVEVIAGTATAGIPHGAIIADYLKLPFAYIRSKPKDHGAGNQVEGRVAKGQKMVVVEDLISTGGSVLEAVAAAEREGADVLGVVAIFTYELEKANSKFADADVKLATLTNYSELIEIAKETGYVTKEELELLKKFKENQETWQA</sequence>
<reference key="1">
    <citation type="journal article" date="2007" name="J. Bacteriol.">
        <title>The complete genome sequence of the lactic acid bacterial paradigm Lactococcus lactis subsp. cremoris MG1363.</title>
        <authorList>
            <person name="Wegmann U."/>
            <person name="O'Connell-Motherway M."/>
            <person name="Zomer A."/>
            <person name="Buist G."/>
            <person name="Shearman C."/>
            <person name="Canchaya C."/>
            <person name="Ventura M."/>
            <person name="Goesmann A."/>
            <person name="Gasson M.J."/>
            <person name="Kuipers O.P."/>
            <person name="van Sinderen D."/>
            <person name="Kok J."/>
        </authorList>
    </citation>
    <scope>NUCLEOTIDE SEQUENCE [LARGE SCALE GENOMIC DNA]</scope>
    <source>
        <strain>MG1363</strain>
    </source>
</reference>
<organism>
    <name type="scientific">Lactococcus lactis subsp. cremoris (strain MG1363)</name>
    <dbReference type="NCBI Taxonomy" id="416870"/>
    <lineage>
        <taxon>Bacteria</taxon>
        <taxon>Bacillati</taxon>
        <taxon>Bacillota</taxon>
        <taxon>Bacilli</taxon>
        <taxon>Lactobacillales</taxon>
        <taxon>Streptococcaceae</taxon>
        <taxon>Lactococcus</taxon>
        <taxon>Lactococcus cremoris subsp. cremoris</taxon>
    </lineage>
</organism>
<evidence type="ECO:0000255" key="1">
    <source>
        <dbReference type="HAMAP-Rule" id="MF_01208"/>
    </source>
</evidence>
<proteinExistence type="inferred from homology"/>
<feature type="chain" id="PRO_1000066246" description="Orotate phosphoribosyltransferase">
    <location>
        <begin position="1"/>
        <end position="209"/>
    </location>
</feature>
<feature type="binding site" evidence="1">
    <location>
        <position position="96"/>
    </location>
    <ligand>
        <name>5-phospho-alpha-D-ribose 1-diphosphate</name>
        <dbReference type="ChEBI" id="CHEBI:58017"/>
        <note>ligand shared between dimeric partners</note>
    </ligand>
</feature>
<feature type="binding site" evidence="1">
    <location>
        <position position="100"/>
    </location>
    <ligand>
        <name>5-phospho-alpha-D-ribose 1-diphosphate</name>
        <dbReference type="ChEBI" id="CHEBI:58017"/>
        <note>ligand shared between dimeric partners</note>
    </ligand>
</feature>
<feature type="binding site" evidence="1">
    <location>
        <position position="102"/>
    </location>
    <ligand>
        <name>5-phospho-alpha-D-ribose 1-diphosphate</name>
        <dbReference type="ChEBI" id="CHEBI:58017"/>
        <note>ligand shared between dimeric partners</note>
    </ligand>
</feature>
<feature type="binding site" description="in other chain" evidence="1">
    <location>
        <begin position="122"/>
        <end position="130"/>
    </location>
    <ligand>
        <name>5-phospho-alpha-D-ribose 1-diphosphate</name>
        <dbReference type="ChEBI" id="CHEBI:58017"/>
        <note>ligand shared between dimeric partners</note>
    </ligand>
</feature>
<feature type="binding site" evidence="1">
    <location>
        <position position="126"/>
    </location>
    <ligand>
        <name>orotate</name>
        <dbReference type="ChEBI" id="CHEBI:30839"/>
    </ligand>
</feature>
<protein>
    <recommendedName>
        <fullName evidence="1">Orotate phosphoribosyltransferase</fullName>
        <shortName evidence="1">OPRT</shortName>
        <shortName evidence="1">OPRTase</shortName>
        <ecNumber evidence="1">2.4.2.10</ecNumber>
    </recommendedName>
</protein>
<comment type="function">
    <text evidence="1">Catalyzes the transfer of a ribosyl phosphate group from 5-phosphoribose 1-diphosphate to orotate, leading to the formation of orotidine monophosphate (OMP).</text>
</comment>
<comment type="catalytic activity">
    <reaction evidence="1">
        <text>orotidine 5'-phosphate + diphosphate = orotate + 5-phospho-alpha-D-ribose 1-diphosphate</text>
        <dbReference type="Rhea" id="RHEA:10380"/>
        <dbReference type="ChEBI" id="CHEBI:30839"/>
        <dbReference type="ChEBI" id="CHEBI:33019"/>
        <dbReference type="ChEBI" id="CHEBI:57538"/>
        <dbReference type="ChEBI" id="CHEBI:58017"/>
        <dbReference type="EC" id="2.4.2.10"/>
    </reaction>
</comment>
<comment type="cofactor">
    <cofactor evidence="1">
        <name>Mg(2+)</name>
        <dbReference type="ChEBI" id="CHEBI:18420"/>
    </cofactor>
</comment>
<comment type="pathway">
    <text evidence="1">Pyrimidine metabolism; UMP biosynthesis via de novo pathway; UMP from orotate: step 1/2.</text>
</comment>
<comment type="subunit">
    <text evidence="1">Homodimer.</text>
</comment>
<comment type="similarity">
    <text evidence="1">Belongs to the purine/pyrimidine phosphoribosyltransferase family. PyrE subfamily.</text>
</comment>
<dbReference type="EC" id="2.4.2.10" evidence="1"/>
<dbReference type="EMBL" id="AM406671">
    <property type="protein sequence ID" value="CAL98087.1"/>
    <property type="molecule type" value="Genomic_DNA"/>
</dbReference>
<dbReference type="RefSeq" id="WP_011835354.1">
    <property type="nucleotide sequence ID" value="NC_009004.1"/>
</dbReference>
<dbReference type="SMR" id="A2RLC0"/>
<dbReference type="STRING" id="416870.llmg_1509"/>
<dbReference type="KEGG" id="llm:llmg_1509"/>
<dbReference type="eggNOG" id="COG0461">
    <property type="taxonomic scope" value="Bacteria"/>
</dbReference>
<dbReference type="HOGENOM" id="CLU_074878_1_1_9"/>
<dbReference type="OrthoDB" id="9802134at2"/>
<dbReference type="PhylomeDB" id="A2RLC0"/>
<dbReference type="UniPathway" id="UPA00070">
    <property type="reaction ID" value="UER00119"/>
</dbReference>
<dbReference type="Proteomes" id="UP000000364">
    <property type="component" value="Chromosome"/>
</dbReference>
<dbReference type="GO" id="GO:0000287">
    <property type="term" value="F:magnesium ion binding"/>
    <property type="evidence" value="ECO:0007669"/>
    <property type="project" value="UniProtKB-UniRule"/>
</dbReference>
<dbReference type="GO" id="GO:0004588">
    <property type="term" value="F:orotate phosphoribosyltransferase activity"/>
    <property type="evidence" value="ECO:0007669"/>
    <property type="project" value="UniProtKB-UniRule"/>
</dbReference>
<dbReference type="GO" id="GO:0044205">
    <property type="term" value="P:'de novo' UMP biosynthetic process"/>
    <property type="evidence" value="ECO:0007669"/>
    <property type="project" value="UniProtKB-UniRule"/>
</dbReference>
<dbReference type="GO" id="GO:0019856">
    <property type="term" value="P:pyrimidine nucleobase biosynthetic process"/>
    <property type="evidence" value="ECO:0007669"/>
    <property type="project" value="TreeGrafter"/>
</dbReference>
<dbReference type="CDD" id="cd06223">
    <property type="entry name" value="PRTases_typeI"/>
    <property type="match status" value="1"/>
</dbReference>
<dbReference type="Gene3D" id="3.40.50.2020">
    <property type="match status" value="1"/>
</dbReference>
<dbReference type="HAMAP" id="MF_01208">
    <property type="entry name" value="PyrE"/>
    <property type="match status" value="1"/>
</dbReference>
<dbReference type="InterPro" id="IPR023031">
    <property type="entry name" value="OPRT"/>
</dbReference>
<dbReference type="InterPro" id="IPR004467">
    <property type="entry name" value="Or_phspho_trans_dom"/>
</dbReference>
<dbReference type="InterPro" id="IPR000836">
    <property type="entry name" value="PRibTrfase_dom"/>
</dbReference>
<dbReference type="InterPro" id="IPR029057">
    <property type="entry name" value="PRTase-like"/>
</dbReference>
<dbReference type="NCBIfam" id="TIGR00336">
    <property type="entry name" value="pyrE"/>
    <property type="match status" value="1"/>
</dbReference>
<dbReference type="PANTHER" id="PTHR19278">
    <property type="entry name" value="OROTATE PHOSPHORIBOSYLTRANSFERASE"/>
    <property type="match status" value="1"/>
</dbReference>
<dbReference type="PANTHER" id="PTHR19278:SF9">
    <property type="entry name" value="URIDINE 5'-MONOPHOSPHATE SYNTHASE"/>
    <property type="match status" value="1"/>
</dbReference>
<dbReference type="Pfam" id="PF00156">
    <property type="entry name" value="Pribosyltran"/>
    <property type="match status" value="1"/>
</dbReference>
<dbReference type="SUPFAM" id="SSF53271">
    <property type="entry name" value="PRTase-like"/>
    <property type="match status" value="1"/>
</dbReference>
<dbReference type="PROSITE" id="PS00103">
    <property type="entry name" value="PUR_PYR_PR_TRANSFER"/>
    <property type="match status" value="1"/>
</dbReference>
<name>PYRE_LACLM</name>
<gene>
    <name evidence="1" type="primary">pyrE</name>
    <name type="ordered locus">llmg_1509</name>
</gene>
<keyword id="KW-0328">Glycosyltransferase</keyword>
<keyword id="KW-0460">Magnesium</keyword>
<keyword id="KW-0665">Pyrimidine biosynthesis</keyword>
<keyword id="KW-0808">Transferase</keyword>
<accession>A2RLC0</accession>